<organism>
    <name type="scientific">Cupriavidus metallidurans (strain ATCC 43123 / DSM 2839 / NBRC 102507 / CH34)</name>
    <name type="common">Ralstonia metallidurans</name>
    <dbReference type="NCBI Taxonomy" id="266264"/>
    <lineage>
        <taxon>Bacteria</taxon>
        <taxon>Pseudomonadati</taxon>
        <taxon>Pseudomonadota</taxon>
        <taxon>Betaproteobacteria</taxon>
        <taxon>Burkholderiales</taxon>
        <taxon>Burkholderiaceae</taxon>
        <taxon>Cupriavidus</taxon>
    </lineage>
</organism>
<comment type="function">
    <text evidence="1">Transfers a GMP moiety from GTP to Mo-molybdopterin (Mo-MPT) cofactor (Moco or molybdenum cofactor) to form Mo-molybdopterin guanine dinucleotide (Mo-MGD) cofactor.</text>
</comment>
<comment type="catalytic activity">
    <reaction evidence="1">
        <text>Mo-molybdopterin + GTP + H(+) = Mo-molybdopterin guanine dinucleotide + diphosphate</text>
        <dbReference type="Rhea" id="RHEA:34243"/>
        <dbReference type="ChEBI" id="CHEBI:15378"/>
        <dbReference type="ChEBI" id="CHEBI:33019"/>
        <dbReference type="ChEBI" id="CHEBI:37565"/>
        <dbReference type="ChEBI" id="CHEBI:71302"/>
        <dbReference type="ChEBI" id="CHEBI:71310"/>
        <dbReference type="EC" id="2.7.7.77"/>
    </reaction>
</comment>
<comment type="cofactor">
    <cofactor evidence="1">
        <name>Mg(2+)</name>
        <dbReference type="ChEBI" id="CHEBI:18420"/>
    </cofactor>
</comment>
<comment type="subunit">
    <text evidence="1">Monomer.</text>
</comment>
<comment type="subcellular location">
    <subcellularLocation>
        <location evidence="1">Cytoplasm</location>
    </subcellularLocation>
</comment>
<comment type="domain">
    <text evidence="1">The N-terminal domain determines nucleotide recognition and specific binding, while the C-terminal domain determines the specific binding to the target protein.</text>
</comment>
<comment type="similarity">
    <text evidence="1">Belongs to the MobA family.</text>
</comment>
<reference key="1">
    <citation type="journal article" date="2010" name="PLoS ONE">
        <title>The complete genome sequence of Cupriavidus metallidurans strain CH34, a master survivalist in harsh and anthropogenic environments.</title>
        <authorList>
            <person name="Janssen P.J."/>
            <person name="Van Houdt R."/>
            <person name="Moors H."/>
            <person name="Monsieurs P."/>
            <person name="Morin N."/>
            <person name="Michaux A."/>
            <person name="Benotmane M.A."/>
            <person name="Leys N."/>
            <person name="Vallaeys T."/>
            <person name="Lapidus A."/>
            <person name="Monchy S."/>
            <person name="Medigue C."/>
            <person name="Taghavi S."/>
            <person name="McCorkle S."/>
            <person name="Dunn J."/>
            <person name="van der Lelie D."/>
            <person name="Mergeay M."/>
        </authorList>
    </citation>
    <scope>NUCLEOTIDE SEQUENCE [LARGE SCALE GENOMIC DNA]</scope>
    <source>
        <strain>ATCC 43123 / DSM 2839 / NBRC 102507 / CH34</strain>
    </source>
</reference>
<feature type="chain" id="PRO_1000019139" description="Molybdenum cofactor guanylyltransferase">
    <location>
        <begin position="1"/>
        <end position="203"/>
    </location>
</feature>
<feature type="binding site" evidence="1">
    <location>
        <begin position="12"/>
        <end position="14"/>
    </location>
    <ligand>
        <name>GTP</name>
        <dbReference type="ChEBI" id="CHEBI:37565"/>
    </ligand>
</feature>
<feature type="binding site" evidence="1">
    <location>
        <position position="25"/>
    </location>
    <ligand>
        <name>GTP</name>
        <dbReference type="ChEBI" id="CHEBI:37565"/>
    </ligand>
</feature>
<feature type="binding site" evidence="1">
    <location>
        <position position="53"/>
    </location>
    <ligand>
        <name>GTP</name>
        <dbReference type="ChEBI" id="CHEBI:37565"/>
    </ligand>
</feature>
<feature type="binding site" evidence="1">
    <location>
        <position position="71"/>
    </location>
    <ligand>
        <name>GTP</name>
        <dbReference type="ChEBI" id="CHEBI:37565"/>
    </ligand>
</feature>
<feature type="binding site" evidence="1">
    <location>
        <position position="101"/>
    </location>
    <ligand>
        <name>GTP</name>
        <dbReference type="ChEBI" id="CHEBI:37565"/>
    </ligand>
</feature>
<feature type="binding site" evidence="1">
    <location>
        <position position="101"/>
    </location>
    <ligand>
        <name>Mg(2+)</name>
        <dbReference type="ChEBI" id="CHEBI:18420"/>
    </ligand>
</feature>
<proteinExistence type="inferred from homology"/>
<gene>
    <name evidence="1" type="primary">mobA</name>
    <name type="ordered locus">Rmet_2442</name>
</gene>
<dbReference type="EC" id="2.7.7.77" evidence="1"/>
<dbReference type="EMBL" id="CP000352">
    <property type="protein sequence ID" value="ABF09319.1"/>
    <property type="molecule type" value="Genomic_DNA"/>
</dbReference>
<dbReference type="RefSeq" id="WP_011517036.1">
    <property type="nucleotide sequence ID" value="NC_007973.1"/>
</dbReference>
<dbReference type="SMR" id="Q1LKK7"/>
<dbReference type="STRING" id="266264.Rmet_2442"/>
<dbReference type="KEGG" id="rme:Rmet_2442"/>
<dbReference type="eggNOG" id="COG0746">
    <property type="taxonomic scope" value="Bacteria"/>
</dbReference>
<dbReference type="HOGENOM" id="CLU_055597_5_1_4"/>
<dbReference type="Proteomes" id="UP000002429">
    <property type="component" value="Chromosome"/>
</dbReference>
<dbReference type="GO" id="GO:0005737">
    <property type="term" value="C:cytoplasm"/>
    <property type="evidence" value="ECO:0007669"/>
    <property type="project" value="UniProtKB-SubCell"/>
</dbReference>
<dbReference type="GO" id="GO:0005525">
    <property type="term" value="F:GTP binding"/>
    <property type="evidence" value="ECO:0007669"/>
    <property type="project" value="UniProtKB-UniRule"/>
</dbReference>
<dbReference type="GO" id="GO:0046872">
    <property type="term" value="F:metal ion binding"/>
    <property type="evidence" value="ECO:0007669"/>
    <property type="project" value="UniProtKB-KW"/>
</dbReference>
<dbReference type="GO" id="GO:0061603">
    <property type="term" value="F:molybdenum cofactor guanylyltransferase activity"/>
    <property type="evidence" value="ECO:0007669"/>
    <property type="project" value="UniProtKB-EC"/>
</dbReference>
<dbReference type="GO" id="GO:1902758">
    <property type="term" value="P:bis(molybdopterin guanine dinucleotide)molybdenum biosynthetic process"/>
    <property type="evidence" value="ECO:0007669"/>
    <property type="project" value="TreeGrafter"/>
</dbReference>
<dbReference type="CDD" id="cd02503">
    <property type="entry name" value="MobA"/>
    <property type="match status" value="1"/>
</dbReference>
<dbReference type="Gene3D" id="3.90.550.10">
    <property type="entry name" value="Spore Coat Polysaccharide Biosynthesis Protein SpsA, Chain A"/>
    <property type="match status" value="1"/>
</dbReference>
<dbReference type="HAMAP" id="MF_00316">
    <property type="entry name" value="MobA"/>
    <property type="match status" value="1"/>
</dbReference>
<dbReference type="InterPro" id="IPR025877">
    <property type="entry name" value="MobA-like_NTP_Trfase"/>
</dbReference>
<dbReference type="InterPro" id="IPR013482">
    <property type="entry name" value="Molybde_CF_guanTrfase"/>
</dbReference>
<dbReference type="InterPro" id="IPR029044">
    <property type="entry name" value="Nucleotide-diphossugar_trans"/>
</dbReference>
<dbReference type="NCBIfam" id="TIGR02665">
    <property type="entry name" value="molyb_mobA"/>
    <property type="match status" value="1"/>
</dbReference>
<dbReference type="PANTHER" id="PTHR19136">
    <property type="entry name" value="MOLYBDENUM COFACTOR GUANYLYLTRANSFERASE"/>
    <property type="match status" value="1"/>
</dbReference>
<dbReference type="PANTHER" id="PTHR19136:SF81">
    <property type="entry name" value="MOLYBDENUM COFACTOR GUANYLYLTRANSFERASE"/>
    <property type="match status" value="1"/>
</dbReference>
<dbReference type="Pfam" id="PF12804">
    <property type="entry name" value="NTP_transf_3"/>
    <property type="match status" value="1"/>
</dbReference>
<dbReference type="SUPFAM" id="SSF53448">
    <property type="entry name" value="Nucleotide-diphospho-sugar transferases"/>
    <property type="match status" value="1"/>
</dbReference>
<sequence>MISRDDITGLILAGGRGSRMGGTDKGLQPLRGVPMAMHTLMRLSAQTGAVLINANRNLAAYESFGVPVVTDSVPDFAGPLAGMLAGLEQCQTGWMVTAPCDSPFLPTDLVQRLAQAIETEDAELAIPVTIDADGRRQTQPVFCLMPASAIDSLVAYLNGGGRKIETWAASHRLVEVPFDDAAAFANINTLDELHMHESEKRAG</sequence>
<name>MOBA_CUPMC</name>
<evidence type="ECO:0000255" key="1">
    <source>
        <dbReference type="HAMAP-Rule" id="MF_00316"/>
    </source>
</evidence>
<protein>
    <recommendedName>
        <fullName evidence="1">Molybdenum cofactor guanylyltransferase</fullName>
        <shortName evidence="1">MoCo guanylyltransferase</shortName>
        <ecNumber evidence="1">2.7.7.77</ecNumber>
    </recommendedName>
    <alternativeName>
        <fullName evidence="1">GTP:molybdopterin guanylyltransferase</fullName>
    </alternativeName>
    <alternativeName>
        <fullName evidence="1">Mo-MPT guanylyltransferase</fullName>
    </alternativeName>
    <alternativeName>
        <fullName evidence="1">Molybdopterin guanylyltransferase</fullName>
    </alternativeName>
    <alternativeName>
        <fullName evidence="1">Molybdopterin-guanine dinucleotide synthase</fullName>
        <shortName evidence="1">MGD synthase</shortName>
    </alternativeName>
</protein>
<accession>Q1LKK7</accession>
<keyword id="KW-0963">Cytoplasm</keyword>
<keyword id="KW-0342">GTP-binding</keyword>
<keyword id="KW-0460">Magnesium</keyword>
<keyword id="KW-0479">Metal-binding</keyword>
<keyword id="KW-0501">Molybdenum cofactor biosynthesis</keyword>
<keyword id="KW-0547">Nucleotide-binding</keyword>
<keyword id="KW-1185">Reference proteome</keyword>
<keyword id="KW-0808">Transferase</keyword>